<gene>
    <name evidence="1" type="primary">murA</name>
    <name type="ordered locus">Smed_0206</name>
</gene>
<keyword id="KW-0131">Cell cycle</keyword>
<keyword id="KW-0132">Cell division</keyword>
<keyword id="KW-0133">Cell shape</keyword>
<keyword id="KW-0961">Cell wall biogenesis/degradation</keyword>
<keyword id="KW-0963">Cytoplasm</keyword>
<keyword id="KW-0573">Peptidoglycan synthesis</keyword>
<keyword id="KW-0670">Pyruvate</keyword>
<keyword id="KW-0808">Transferase</keyword>
<protein>
    <recommendedName>
        <fullName evidence="1">UDP-N-acetylglucosamine 1-carboxyvinyltransferase</fullName>
        <ecNumber evidence="1">2.5.1.7</ecNumber>
    </recommendedName>
    <alternativeName>
        <fullName evidence="1">Enoylpyruvate transferase</fullName>
    </alternativeName>
    <alternativeName>
        <fullName evidence="1">UDP-N-acetylglucosamine enolpyruvyl transferase</fullName>
        <shortName evidence="1">EPT</shortName>
    </alternativeName>
</protein>
<proteinExistence type="inferred from homology"/>
<feature type="chain" id="PRO_1000023109" description="UDP-N-acetylglucosamine 1-carboxyvinyltransferase">
    <location>
        <begin position="1"/>
        <end position="430"/>
    </location>
</feature>
<feature type="active site" description="Proton donor" evidence="1">
    <location>
        <position position="126"/>
    </location>
</feature>
<feature type="binding site" evidence="1">
    <location>
        <begin position="22"/>
        <end position="23"/>
    </location>
    <ligand>
        <name>phosphoenolpyruvate</name>
        <dbReference type="ChEBI" id="CHEBI:58702"/>
    </ligand>
</feature>
<feature type="binding site" evidence="1">
    <location>
        <position position="102"/>
    </location>
    <ligand>
        <name>UDP-N-acetyl-alpha-D-glucosamine</name>
        <dbReference type="ChEBI" id="CHEBI:57705"/>
    </ligand>
</feature>
<feature type="binding site" evidence="1">
    <location>
        <begin position="131"/>
        <end position="135"/>
    </location>
    <ligand>
        <name>UDP-N-acetyl-alpha-D-glucosamine</name>
        <dbReference type="ChEBI" id="CHEBI:57705"/>
    </ligand>
</feature>
<feature type="binding site" evidence="1">
    <location>
        <begin position="172"/>
        <end position="175"/>
    </location>
    <ligand>
        <name>UDP-N-acetyl-alpha-D-glucosamine</name>
        <dbReference type="ChEBI" id="CHEBI:57705"/>
    </ligand>
</feature>
<feature type="binding site" evidence="1">
    <location>
        <position position="317"/>
    </location>
    <ligand>
        <name>UDP-N-acetyl-alpha-D-glucosamine</name>
        <dbReference type="ChEBI" id="CHEBI:57705"/>
    </ligand>
</feature>
<feature type="binding site" evidence="1">
    <location>
        <position position="339"/>
    </location>
    <ligand>
        <name>UDP-N-acetyl-alpha-D-glucosamine</name>
        <dbReference type="ChEBI" id="CHEBI:57705"/>
    </ligand>
</feature>
<feature type="modified residue" description="2-(S-cysteinyl)pyruvic acid O-phosphothioketal" evidence="1">
    <location>
        <position position="126"/>
    </location>
</feature>
<sequence length="430" mass="45509">MDRIRIVGGNELHGVIPISGAKNAALPLMIASLLTDDTLTLENVPHLADVEQLIRILGNHGADISVNGRRERQGESYARTVHFTSRNIVSTTAPYELVSKMRASFWVIGPLLAREGRARVSLPGGCAIGTRPVDLFIEGLTALGASIEIDGGYVNATAPAGGLIGGRYTFPKVSVGATHVLMMAATLANGTTVLGNAAREPEVVDLAKCLNAMGAKISGQGTSTITIEGVRSLSGARHRVLPDRIETGTYAMAVAMAGGDVILEDTEASLLDTALEAIRRAGAEISDTNNGIRIVRNGAGIRPVDIVTDPFPGFPTDLQAQFMGLMTRSSGVSHITETIFENRFMHVQELARLGAKISLSGQTAKVEGVSRLKGAPVMATDLRASVSLVIAGLAAEGETMVSRVYHLDRGFERLEEKLTRCGAHVERVSD</sequence>
<name>MURA_SINMW</name>
<dbReference type="EC" id="2.5.1.7" evidence="1"/>
<dbReference type="EMBL" id="CP000738">
    <property type="protein sequence ID" value="ABR59065.1"/>
    <property type="molecule type" value="Genomic_DNA"/>
</dbReference>
<dbReference type="RefSeq" id="WP_011974417.1">
    <property type="nucleotide sequence ID" value="NC_009636.1"/>
</dbReference>
<dbReference type="RefSeq" id="YP_001325900.1">
    <property type="nucleotide sequence ID" value="NC_009636.1"/>
</dbReference>
<dbReference type="SMR" id="A6U5Y5"/>
<dbReference type="STRING" id="366394.Smed_0206"/>
<dbReference type="GeneID" id="61613046"/>
<dbReference type="KEGG" id="smd:Smed_0206"/>
<dbReference type="PATRIC" id="fig|366394.8.peg.3270"/>
<dbReference type="eggNOG" id="COG0766">
    <property type="taxonomic scope" value="Bacteria"/>
</dbReference>
<dbReference type="HOGENOM" id="CLU_027387_0_0_5"/>
<dbReference type="OrthoDB" id="9803760at2"/>
<dbReference type="UniPathway" id="UPA00219"/>
<dbReference type="Proteomes" id="UP000001108">
    <property type="component" value="Chromosome"/>
</dbReference>
<dbReference type="GO" id="GO:0005737">
    <property type="term" value="C:cytoplasm"/>
    <property type="evidence" value="ECO:0007669"/>
    <property type="project" value="UniProtKB-SubCell"/>
</dbReference>
<dbReference type="GO" id="GO:0008760">
    <property type="term" value="F:UDP-N-acetylglucosamine 1-carboxyvinyltransferase activity"/>
    <property type="evidence" value="ECO:0007669"/>
    <property type="project" value="UniProtKB-UniRule"/>
</dbReference>
<dbReference type="GO" id="GO:0051301">
    <property type="term" value="P:cell division"/>
    <property type="evidence" value="ECO:0007669"/>
    <property type="project" value="UniProtKB-KW"/>
</dbReference>
<dbReference type="GO" id="GO:0071555">
    <property type="term" value="P:cell wall organization"/>
    <property type="evidence" value="ECO:0007669"/>
    <property type="project" value="UniProtKB-KW"/>
</dbReference>
<dbReference type="GO" id="GO:0009252">
    <property type="term" value="P:peptidoglycan biosynthetic process"/>
    <property type="evidence" value="ECO:0007669"/>
    <property type="project" value="UniProtKB-UniRule"/>
</dbReference>
<dbReference type="GO" id="GO:0008360">
    <property type="term" value="P:regulation of cell shape"/>
    <property type="evidence" value="ECO:0007669"/>
    <property type="project" value="UniProtKB-KW"/>
</dbReference>
<dbReference type="GO" id="GO:0019277">
    <property type="term" value="P:UDP-N-acetylgalactosamine biosynthetic process"/>
    <property type="evidence" value="ECO:0007669"/>
    <property type="project" value="InterPro"/>
</dbReference>
<dbReference type="CDD" id="cd01555">
    <property type="entry name" value="UdpNAET"/>
    <property type="match status" value="1"/>
</dbReference>
<dbReference type="FunFam" id="3.65.10.10:FF:000001">
    <property type="entry name" value="UDP-N-acetylglucosamine 1-carboxyvinyltransferase"/>
    <property type="match status" value="1"/>
</dbReference>
<dbReference type="Gene3D" id="3.65.10.10">
    <property type="entry name" value="Enolpyruvate transferase domain"/>
    <property type="match status" value="2"/>
</dbReference>
<dbReference type="HAMAP" id="MF_00111">
    <property type="entry name" value="MurA"/>
    <property type="match status" value="1"/>
</dbReference>
<dbReference type="InterPro" id="IPR001986">
    <property type="entry name" value="Enolpyruvate_Tfrase_dom"/>
</dbReference>
<dbReference type="InterPro" id="IPR036968">
    <property type="entry name" value="Enolpyruvate_Tfrase_sf"/>
</dbReference>
<dbReference type="InterPro" id="IPR050068">
    <property type="entry name" value="MurA_subfamily"/>
</dbReference>
<dbReference type="InterPro" id="IPR013792">
    <property type="entry name" value="RNA3'P_cycl/enolpyr_Trfase_a/b"/>
</dbReference>
<dbReference type="InterPro" id="IPR005750">
    <property type="entry name" value="UDP_GlcNAc_COvinyl_MurA"/>
</dbReference>
<dbReference type="NCBIfam" id="TIGR01072">
    <property type="entry name" value="murA"/>
    <property type="match status" value="1"/>
</dbReference>
<dbReference type="NCBIfam" id="NF006873">
    <property type="entry name" value="PRK09369.1"/>
    <property type="match status" value="1"/>
</dbReference>
<dbReference type="PANTHER" id="PTHR43783">
    <property type="entry name" value="UDP-N-ACETYLGLUCOSAMINE 1-CARBOXYVINYLTRANSFERASE"/>
    <property type="match status" value="1"/>
</dbReference>
<dbReference type="PANTHER" id="PTHR43783:SF1">
    <property type="entry name" value="UDP-N-ACETYLGLUCOSAMINE 1-CARBOXYVINYLTRANSFERASE"/>
    <property type="match status" value="1"/>
</dbReference>
<dbReference type="Pfam" id="PF00275">
    <property type="entry name" value="EPSP_synthase"/>
    <property type="match status" value="1"/>
</dbReference>
<dbReference type="SUPFAM" id="SSF55205">
    <property type="entry name" value="EPT/RTPC-like"/>
    <property type="match status" value="1"/>
</dbReference>
<organism>
    <name type="scientific">Sinorhizobium medicae (strain WSM419)</name>
    <name type="common">Ensifer medicae</name>
    <dbReference type="NCBI Taxonomy" id="366394"/>
    <lineage>
        <taxon>Bacteria</taxon>
        <taxon>Pseudomonadati</taxon>
        <taxon>Pseudomonadota</taxon>
        <taxon>Alphaproteobacteria</taxon>
        <taxon>Hyphomicrobiales</taxon>
        <taxon>Rhizobiaceae</taxon>
        <taxon>Sinorhizobium/Ensifer group</taxon>
        <taxon>Sinorhizobium</taxon>
    </lineage>
</organism>
<reference key="1">
    <citation type="submission" date="2007-06" db="EMBL/GenBank/DDBJ databases">
        <title>Complete sequence of Sinorhizobium medicae WSM419 chromosome.</title>
        <authorList>
            <consortium name="US DOE Joint Genome Institute"/>
            <person name="Copeland A."/>
            <person name="Lucas S."/>
            <person name="Lapidus A."/>
            <person name="Barry K."/>
            <person name="Glavina del Rio T."/>
            <person name="Dalin E."/>
            <person name="Tice H."/>
            <person name="Pitluck S."/>
            <person name="Chain P."/>
            <person name="Malfatti S."/>
            <person name="Shin M."/>
            <person name="Vergez L."/>
            <person name="Schmutz J."/>
            <person name="Larimer F."/>
            <person name="Land M."/>
            <person name="Hauser L."/>
            <person name="Kyrpides N."/>
            <person name="Mikhailova N."/>
            <person name="Reeve W.G."/>
            <person name="Richardson P."/>
        </authorList>
    </citation>
    <scope>NUCLEOTIDE SEQUENCE [LARGE SCALE GENOMIC DNA]</scope>
    <source>
        <strain>WSM419</strain>
    </source>
</reference>
<accession>A6U5Y5</accession>
<evidence type="ECO:0000255" key="1">
    <source>
        <dbReference type="HAMAP-Rule" id="MF_00111"/>
    </source>
</evidence>
<comment type="function">
    <text evidence="1">Cell wall formation. Adds enolpyruvyl to UDP-N-acetylglucosamine.</text>
</comment>
<comment type="catalytic activity">
    <reaction evidence="1">
        <text>phosphoenolpyruvate + UDP-N-acetyl-alpha-D-glucosamine = UDP-N-acetyl-3-O-(1-carboxyvinyl)-alpha-D-glucosamine + phosphate</text>
        <dbReference type="Rhea" id="RHEA:18681"/>
        <dbReference type="ChEBI" id="CHEBI:43474"/>
        <dbReference type="ChEBI" id="CHEBI:57705"/>
        <dbReference type="ChEBI" id="CHEBI:58702"/>
        <dbReference type="ChEBI" id="CHEBI:68483"/>
        <dbReference type="EC" id="2.5.1.7"/>
    </reaction>
</comment>
<comment type="pathway">
    <text evidence="1">Cell wall biogenesis; peptidoglycan biosynthesis.</text>
</comment>
<comment type="subcellular location">
    <subcellularLocation>
        <location evidence="1">Cytoplasm</location>
    </subcellularLocation>
</comment>
<comment type="similarity">
    <text evidence="1">Belongs to the EPSP synthase family. MurA subfamily.</text>
</comment>